<evidence type="ECO:0000255" key="1">
    <source>
        <dbReference type="HAMAP-Rule" id="MF_01345"/>
    </source>
</evidence>
<evidence type="ECO:0000305" key="2"/>
<protein>
    <recommendedName>
        <fullName evidence="1">Small ribosomal subunit protein uS17</fullName>
    </recommendedName>
    <alternativeName>
        <fullName evidence="2">30S ribosomal protein S17</fullName>
    </alternativeName>
</protein>
<accession>Q97BW7</accession>
<gene>
    <name evidence="1" type="primary">rps17</name>
    <name type="ordered locus">TV0338</name>
    <name type="ORF">TVG0337549</name>
</gene>
<feature type="chain" id="PRO_0000232620" description="Small ribosomal subunit protein uS17">
    <location>
        <begin position="1"/>
        <end position="109"/>
    </location>
</feature>
<reference key="1">
    <citation type="journal article" date="2000" name="Proc. Natl. Acad. Sci. U.S.A.">
        <title>Archaeal adaptation to higher temperatures revealed by genomic sequence of Thermoplasma volcanium.</title>
        <authorList>
            <person name="Kawashima T."/>
            <person name="Amano N."/>
            <person name="Koike H."/>
            <person name="Makino S."/>
            <person name="Higuchi S."/>
            <person name="Kawashima-Ohya Y."/>
            <person name="Watanabe K."/>
            <person name="Yamazaki M."/>
            <person name="Kanehori K."/>
            <person name="Kawamoto T."/>
            <person name="Nunoshiba T."/>
            <person name="Yamamoto Y."/>
            <person name="Aramaki H."/>
            <person name="Makino K."/>
            <person name="Suzuki M."/>
        </authorList>
    </citation>
    <scope>NUCLEOTIDE SEQUENCE [LARGE SCALE GENOMIC DNA]</scope>
    <source>
        <strain>ATCC 51530 / DSM 4299 / JCM 9571 / NBRC 15438 / GSS1</strain>
    </source>
</reference>
<comment type="function">
    <text evidence="1">One of the primary rRNA binding proteins, it binds specifically to the 5'-end of 16S ribosomal RNA.</text>
</comment>
<comment type="subunit">
    <text evidence="1">Part of the 30S ribosomal subunit.</text>
</comment>
<comment type="similarity">
    <text evidence="1">Belongs to the universal ribosomal protein uS17 family.</text>
</comment>
<proteinExistence type="inferred from homology"/>
<dbReference type="EMBL" id="BA000011">
    <property type="protein sequence ID" value="BAB59480.1"/>
    <property type="molecule type" value="Genomic_DNA"/>
</dbReference>
<dbReference type="RefSeq" id="WP_010916592.1">
    <property type="nucleotide sequence ID" value="NC_002689.2"/>
</dbReference>
<dbReference type="SMR" id="Q97BW7"/>
<dbReference type="STRING" id="273116.gene:9381115"/>
<dbReference type="PaxDb" id="273116-14324553"/>
<dbReference type="GeneID" id="1440850"/>
<dbReference type="KEGG" id="tvo:TVG0337549"/>
<dbReference type="eggNOG" id="arCOG04096">
    <property type="taxonomic scope" value="Archaea"/>
</dbReference>
<dbReference type="HOGENOM" id="CLU_073626_0_3_2"/>
<dbReference type="OrthoDB" id="10698at2157"/>
<dbReference type="PhylomeDB" id="Q97BW7"/>
<dbReference type="Proteomes" id="UP000001017">
    <property type="component" value="Chromosome"/>
</dbReference>
<dbReference type="GO" id="GO:0022627">
    <property type="term" value="C:cytosolic small ribosomal subunit"/>
    <property type="evidence" value="ECO:0007669"/>
    <property type="project" value="TreeGrafter"/>
</dbReference>
<dbReference type="GO" id="GO:0019843">
    <property type="term" value="F:rRNA binding"/>
    <property type="evidence" value="ECO:0007669"/>
    <property type="project" value="UniProtKB-UniRule"/>
</dbReference>
<dbReference type="GO" id="GO:0003735">
    <property type="term" value="F:structural constituent of ribosome"/>
    <property type="evidence" value="ECO:0007669"/>
    <property type="project" value="InterPro"/>
</dbReference>
<dbReference type="GO" id="GO:0006412">
    <property type="term" value="P:translation"/>
    <property type="evidence" value="ECO:0007669"/>
    <property type="project" value="UniProtKB-UniRule"/>
</dbReference>
<dbReference type="CDD" id="cd00364">
    <property type="entry name" value="Ribosomal_uS17"/>
    <property type="match status" value="1"/>
</dbReference>
<dbReference type="Gene3D" id="2.40.50.1000">
    <property type="match status" value="1"/>
</dbReference>
<dbReference type="HAMAP" id="MF_01345_A">
    <property type="entry name" value="Ribosomal_uS17_A"/>
    <property type="match status" value="1"/>
</dbReference>
<dbReference type="InterPro" id="IPR012340">
    <property type="entry name" value="NA-bd_OB-fold"/>
</dbReference>
<dbReference type="InterPro" id="IPR000266">
    <property type="entry name" value="Ribosomal_uS17"/>
</dbReference>
<dbReference type="InterPro" id="IPR028333">
    <property type="entry name" value="Ribosomal_uS17_arc/euk"/>
</dbReference>
<dbReference type="InterPro" id="IPR019978">
    <property type="entry name" value="Ribosomal_uS17_archaeal"/>
</dbReference>
<dbReference type="NCBIfam" id="NF006345">
    <property type="entry name" value="PRK08572.1"/>
    <property type="match status" value="1"/>
</dbReference>
<dbReference type="NCBIfam" id="TIGR03630">
    <property type="entry name" value="uS17_arch"/>
    <property type="match status" value="1"/>
</dbReference>
<dbReference type="PANTHER" id="PTHR10744">
    <property type="entry name" value="40S RIBOSOMAL PROTEIN S11 FAMILY MEMBER"/>
    <property type="match status" value="1"/>
</dbReference>
<dbReference type="PANTHER" id="PTHR10744:SF9">
    <property type="entry name" value="40S RIBOSOMAL PROTEIN S11-RELATED"/>
    <property type="match status" value="1"/>
</dbReference>
<dbReference type="Pfam" id="PF00366">
    <property type="entry name" value="Ribosomal_S17"/>
    <property type="match status" value="1"/>
</dbReference>
<dbReference type="PRINTS" id="PR00973">
    <property type="entry name" value="RIBOSOMALS17"/>
</dbReference>
<dbReference type="SUPFAM" id="SSF50249">
    <property type="entry name" value="Nucleic acid-binding proteins"/>
    <property type="match status" value="1"/>
</dbReference>
<name>RS17_THEVO</name>
<organism>
    <name type="scientific">Thermoplasma volcanium (strain ATCC 51530 / DSM 4299 / JCM 9571 / NBRC 15438 / GSS1)</name>
    <dbReference type="NCBI Taxonomy" id="273116"/>
    <lineage>
        <taxon>Archaea</taxon>
        <taxon>Methanobacteriati</taxon>
        <taxon>Thermoplasmatota</taxon>
        <taxon>Thermoplasmata</taxon>
        <taxon>Thermoplasmatales</taxon>
        <taxon>Thermoplasmataceae</taxon>
        <taxon>Thermoplasma</taxon>
    </lineage>
</organism>
<sequence>MQARNIGLDVSVPEKECTDPHCPFHGNLPVRGQVLTGKVISTAMTRSVVVAREYQQYIPKYERKATKIKKYHVHVPDCIELRVGDTVRFAECRKLAKTISFVVVEKVKQ</sequence>
<keyword id="KW-0687">Ribonucleoprotein</keyword>
<keyword id="KW-0689">Ribosomal protein</keyword>
<keyword id="KW-0694">RNA-binding</keyword>
<keyword id="KW-0699">rRNA-binding</keyword>